<gene>
    <name type="primary">COX23</name>
    <name type="ordered locus">DEHA2F20526g</name>
</gene>
<evidence type="ECO:0000250" key="1"/>
<evidence type="ECO:0000250" key="2">
    <source>
        <dbReference type="UniProtKB" id="P38824"/>
    </source>
</evidence>
<evidence type="ECO:0000255" key="3"/>
<evidence type="ECO:0000255" key="4">
    <source>
        <dbReference type="PROSITE-ProRule" id="PRU01150"/>
    </source>
</evidence>
<evidence type="ECO:0000256" key="5">
    <source>
        <dbReference type="SAM" id="MobiDB-lite"/>
    </source>
</evidence>
<evidence type="ECO:0000305" key="6"/>
<reference key="1">
    <citation type="journal article" date="2004" name="Nature">
        <title>Genome evolution in yeasts.</title>
        <authorList>
            <person name="Dujon B."/>
            <person name="Sherman D."/>
            <person name="Fischer G."/>
            <person name="Durrens P."/>
            <person name="Casaregola S."/>
            <person name="Lafontaine I."/>
            <person name="de Montigny J."/>
            <person name="Marck C."/>
            <person name="Neuveglise C."/>
            <person name="Talla E."/>
            <person name="Goffard N."/>
            <person name="Frangeul L."/>
            <person name="Aigle M."/>
            <person name="Anthouard V."/>
            <person name="Babour A."/>
            <person name="Barbe V."/>
            <person name="Barnay S."/>
            <person name="Blanchin S."/>
            <person name="Beckerich J.-M."/>
            <person name="Beyne E."/>
            <person name="Bleykasten C."/>
            <person name="Boisrame A."/>
            <person name="Boyer J."/>
            <person name="Cattolico L."/>
            <person name="Confanioleri F."/>
            <person name="de Daruvar A."/>
            <person name="Despons L."/>
            <person name="Fabre E."/>
            <person name="Fairhead C."/>
            <person name="Ferry-Dumazet H."/>
            <person name="Groppi A."/>
            <person name="Hantraye F."/>
            <person name="Hennequin C."/>
            <person name="Jauniaux N."/>
            <person name="Joyet P."/>
            <person name="Kachouri R."/>
            <person name="Kerrest A."/>
            <person name="Koszul R."/>
            <person name="Lemaire M."/>
            <person name="Lesur I."/>
            <person name="Ma L."/>
            <person name="Muller H."/>
            <person name="Nicaud J.-M."/>
            <person name="Nikolski M."/>
            <person name="Oztas S."/>
            <person name="Ozier-Kalogeropoulos O."/>
            <person name="Pellenz S."/>
            <person name="Potier S."/>
            <person name="Richard G.-F."/>
            <person name="Straub M.-L."/>
            <person name="Suleau A."/>
            <person name="Swennen D."/>
            <person name="Tekaia F."/>
            <person name="Wesolowski-Louvel M."/>
            <person name="Westhof E."/>
            <person name="Wirth B."/>
            <person name="Zeniou-Meyer M."/>
            <person name="Zivanovic Y."/>
            <person name="Bolotin-Fukuhara M."/>
            <person name="Thierry A."/>
            <person name="Bouchier C."/>
            <person name="Caudron B."/>
            <person name="Scarpelli C."/>
            <person name="Gaillardin C."/>
            <person name="Weissenbach J."/>
            <person name="Wincker P."/>
            <person name="Souciet J.-L."/>
        </authorList>
    </citation>
    <scope>NUCLEOTIDE SEQUENCE [LARGE SCALE GENOMIC DNA]</scope>
    <source>
        <strain>ATCC 36239 / CBS 767 / BCRC 21394 / JCM 1990 / NBRC 0083 / IGC 2968</strain>
    </source>
</reference>
<organism>
    <name type="scientific">Debaryomyces hansenii (strain ATCC 36239 / CBS 767 / BCRC 21394 / JCM 1990 / NBRC 0083 / IGC 2968)</name>
    <name type="common">Yeast</name>
    <name type="synonym">Torulaspora hansenii</name>
    <dbReference type="NCBI Taxonomy" id="284592"/>
    <lineage>
        <taxon>Eukaryota</taxon>
        <taxon>Fungi</taxon>
        <taxon>Dikarya</taxon>
        <taxon>Ascomycota</taxon>
        <taxon>Saccharomycotina</taxon>
        <taxon>Pichiomycetes</taxon>
        <taxon>Debaryomycetaceae</taxon>
        <taxon>Debaryomyces</taxon>
    </lineage>
</organism>
<accession>Q6BKN1</accession>
<dbReference type="EMBL" id="CR382138">
    <property type="protein sequence ID" value="CAG89628.1"/>
    <property type="molecule type" value="Genomic_DNA"/>
</dbReference>
<dbReference type="RefSeq" id="XP_461240.1">
    <property type="nucleotide sequence ID" value="XM_461240.1"/>
</dbReference>
<dbReference type="SMR" id="Q6BKN1"/>
<dbReference type="FunCoup" id="Q6BKN1">
    <property type="interactions" value="12"/>
</dbReference>
<dbReference type="STRING" id="284592.Q6BKN1"/>
<dbReference type="GeneID" id="2903286"/>
<dbReference type="KEGG" id="dha:DEHA2F20526g"/>
<dbReference type="VEuPathDB" id="FungiDB:DEHA2F20526g"/>
<dbReference type="eggNOG" id="KOG4618">
    <property type="taxonomic scope" value="Eukaryota"/>
</dbReference>
<dbReference type="HOGENOM" id="CLU_153383_0_0_1"/>
<dbReference type="InParanoid" id="Q6BKN1"/>
<dbReference type="OMA" id="NPENHRH"/>
<dbReference type="OrthoDB" id="9971592at2759"/>
<dbReference type="Proteomes" id="UP000000599">
    <property type="component" value="Chromosome F"/>
</dbReference>
<dbReference type="GO" id="GO:0005758">
    <property type="term" value="C:mitochondrial intermembrane space"/>
    <property type="evidence" value="ECO:0007669"/>
    <property type="project" value="UniProtKB-SubCell"/>
</dbReference>
<dbReference type="GO" id="GO:0033617">
    <property type="term" value="P:mitochondrial cytochrome c oxidase assembly"/>
    <property type="evidence" value="ECO:0007669"/>
    <property type="project" value="EnsemblFungi"/>
</dbReference>
<dbReference type="InterPro" id="IPR051040">
    <property type="entry name" value="COX23"/>
</dbReference>
<dbReference type="InterPro" id="IPR009069">
    <property type="entry name" value="Cys_alpha_HP_mot_SF"/>
</dbReference>
<dbReference type="PANTHER" id="PTHR46811">
    <property type="entry name" value="COILED-COIL-HELIX-COILED-COIL-HELIX DOMAIN-CONTAINING PROTEIN 7"/>
    <property type="match status" value="1"/>
</dbReference>
<dbReference type="PANTHER" id="PTHR46811:SF1">
    <property type="entry name" value="COILED-COIL-HELIX-COILED-COIL-HELIX DOMAIN-CONTAINING PROTEIN 7"/>
    <property type="match status" value="1"/>
</dbReference>
<dbReference type="SUPFAM" id="SSF47072">
    <property type="entry name" value="Cysteine alpha-hairpin motif"/>
    <property type="match status" value="1"/>
</dbReference>
<dbReference type="PROSITE" id="PS51808">
    <property type="entry name" value="CHCH"/>
    <property type="match status" value="1"/>
</dbReference>
<name>COX23_DEBHA</name>
<comment type="function">
    <text evidence="2">Required for the assembly of cytochrome c oxidase.</text>
</comment>
<comment type="subcellular location">
    <subcellularLocation>
        <location evidence="1">Mitochondrion intermembrane space</location>
    </subcellularLocation>
</comment>
<comment type="similarity">
    <text evidence="6">Belongs to the COX23 family.</text>
</comment>
<proteinExistence type="inferred from homology"/>
<sequence>MSDESQINQENQKETRKKDDSPLTTDEVIKDKGKVDFTKGGVENYKFYPDNPVNHRHKYRWSMKEPSKYYDPCEESRQASINCMLRNQEDKTVCQDFFDAYKECKKDFFNKKVADRRQGKGGWGIW</sequence>
<keyword id="KW-1015">Disulfide bond</keyword>
<keyword id="KW-0496">Mitochondrion</keyword>
<keyword id="KW-1185">Reference proteome</keyword>
<keyword id="KW-0809">Transit peptide</keyword>
<feature type="transit peptide" description="Mitochondrion" evidence="3">
    <location>
        <begin position="1"/>
        <end status="unknown"/>
    </location>
</feature>
<feature type="chain" id="PRO_0000280661" description="Cytochrome c oxidase-assembly factor COX23, mitochondrial">
    <location>
        <begin status="unknown"/>
        <end position="126"/>
    </location>
</feature>
<feature type="domain" description="CHCH" evidence="4">
    <location>
        <begin position="70"/>
        <end position="112"/>
    </location>
</feature>
<feature type="region of interest" description="Disordered" evidence="5">
    <location>
        <begin position="1"/>
        <end position="29"/>
    </location>
</feature>
<feature type="short sequence motif" description="Cx9C motif 1" evidence="4">
    <location>
        <begin position="73"/>
        <end position="83"/>
    </location>
</feature>
<feature type="short sequence motif" description="Cx9C motif 2" evidence="4">
    <location>
        <begin position="94"/>
        <end position="104"/>
    </location>
</feature>
<feature type="compositionally biased region" description="Polar residues" evidence="5">
    <location>
        <begin position="1"/>
        <end position="10"/>
    </location>
</feature>
<feature type="compositionally biased region" description="Basic and acidic residues" evidence="5">
    <location>
        <begin position="11"/>
        <end position="29"/>
    </location>
</feature>
<feature type="disulfide bond" evidence="4">
    <location>
        <begin position="73"/>
        <end position="104"/>
    </location>
</feature>
<feature type="disulfide bond" evidence="4">
    <location>
        <begin position="83"/>
        <end position="94"/>
    </location>
</feature>
<protein>
    <recommendedName>
        <fullName>Cytochrome c oxidase-assembly factor COX23, mitochondrial</fullName>
    </recommendedName>
</protein>